<evidence type="ECO:0000255" key="1">
    <source>
        <dbReference type="HAMAP-Rule" id="MF_00435"/>
    </source>
</evidence>
<evidence type="ECO:0000255" key="2">
    <source>
        <dbReference type="PROSITE-ProRule" id="PRU01197"/>
    </source>
</evidence>
<evidence type="ECO:0000255" key="3">
    <source>
        <dbReference type="PROSITE-ProRule" id="PRU01198"/>
    </source>
</evidence>
<protein>
    <recommendedName>
        <fullName evidence="1">Ketol-acid reductoisomerase (NADP(+))</fullName>
        <shortName evidence="1">KARI</shortName>
        <ecNumber evidence="1">1.1.1.86</ecNumber>
    </recommendedName>
    <alternativeName>
        <fullName evidence="1">Acetohydroxy-acid isomeroreductase</fullName>
        <shortName evidence="1">AHIR</shortName>
    </alternativeName>
    <alternativeName>
        <fullName evidence="1">Alpha-keto-beta-hydroxylacyl reductoisomerase</fullName>
    </alternativeName>
    <alternativeName>
        <fullName evidence="1">Ketol-acid reductoisomerase type 1</fullName>
    </alternativeName>
    <alternativeName>
        <fullName evidence="1">Ketol-acid reductoisomerase type I</fullName>
    </alternativeName>
</protein>
<feature type="chain" id="PRO_1000050558" description="Ketol-acid reductoisomerase (NADP(+))">
    <location>
        <begin position="1"/>
        <end position="338"/>
    </location>
</feature>
<feature type="domain" description="KARI N-terminal Rossmann" evidence="2">
    <location>
        <begin position="1"/>
        <end position="181"/>
    </location>
</feature>
<feature type="domain" description="KARI C-terminal knotted" evidence="3">
    <location>
        <begin position="182"/>
        <end position="327"/>
    </location>
</feature>
<feature type="active site" evidence="1">
    <location>
        <position position="107"/>
    </location>
</feature>
<feature type="binding site" evidence="1">
    <location>
        <begin position="24"/>
        <end position="27"/>
    </location>
    <ligand>
        <name>NADP(+)</name>
        <dbReference type="ChEBI" id="CHEBI:58349"/>
    </ligand>
</feature>
<feature type="binding site" evidence="1">
    <location>
        <position position="47"/>
    </location>
    <ligand>
        <name>NADP(+)</name>
        <dbReference type="ChEBI" id="CHEBI:58349"/>
    </ligand>
</feature>
<feature type="binding site" evidence="1">
    <location>
        <position position="50"/>
    </location>
    <ligand>
        <name>NADP(+)</name>
        <dbReference type="ChEBI" id="CHEBI:58349"/>
    </ligand>
</feature>
<feature type="binding site" evidence="1">
    <location>
        <position position="52"/>
    </location>
    <ligand>
        <name>NADP(+)</name>
        <dbReference type="ChEBI" id="CHEBI:58349"/>
    </ligand>
</feature>
<feature type="binding site" evidence="1">
    <location>
        <begin position="82"/>
        <end position="85"/>
    </location>
    <ligand>
        <name>NADP(+)</name>
        <dbReference type="ChEBI" id="CHEBI:58349"/>
    </ligand>
</feature>
<feature type="binding site" evidence="1">
    <location>
        <position position="133"/>
    </location>
    <ligand>
        <name>NADP(+)</name>
        <dbReference type="ChEBI" id="CHEBI:58349"/>
    </ligand>
</feature>
<feature type="binding site" evidence="1">
    <location>
        <position position="190"/>
    </location>
    <ligand>
        <name>Mg(2+)</name>
        <dbReference type="ChEBI" id="CHEBI:18420"/>
        <label>1</label>
    </ligand>
</feature>
<feature type="binding site" evidence="1">
    <location>
        <position position="190"/>
    </location>
    <ligand>
        <name>Mg(2+)</name>
        <dbReference type="ChEBI" id="CHEBI:18420"/>
        <label>2</label>
    </ligand>
</feature>
<feature type="binding site" evidence="1">
    <location>
        <position position="194"/>
    </location>
    <ligand>
        <name>Mg(2+)</name>
        <dbReference type="ChEBI" id="CHEBI:18420"/>
        <label>1</label>
    </ligand>
</feature>
<feature type="binding site" evidence="1">
    <location>
        <position position="226"/>
    </location>
    <ligand>
        <name>Mg(2+)</name>
        <dbReference type="ChEBI" id="CHEBI:18420"/>
        <label>2</label>
    </ligand>
</feature>
<feature type="binding site" evidence="1">
    <location>
        <position position="230"/>
    </location>
    <ligand>
        <name>Mg(2+)</name>
        <dbReference type="ChEBI" id="CHEBI:18420"/>
        <label>2</label>
    </ligand>
</feature>
<feature type="binding site" evidence="1">
    <location>
        <position position="251"/>
    </location>
    <ligand>
        <name>substrate</name>
    </ligand>
</feature>
<sequence length="338" mass="36411">MRVFYDKDCDLSIIQGKKVAIIGYGSQGHAHACNLKDSGVDVTVGLRSGSATVAKAEAHGLKVADVKSAVAAADVVMILTPDEFQGRLYKEEIEPNLKKGATLAFAHGFSIHYNQVVPRADLDVIMIAPKAPGHTVRSEFVKGGGIPDLIAIYQDASGNAKNVALSYACGVGGGRTGIIETTFKDETETDLFGEQAVLCGGCVELVKAGFETLVEAGYAPEMAYFECLHELKLIVDLMYEGGIANMNYSISNNAEYGEYVTGPEVINAESRAAMRNALKRIQDGEYAKMFITEGAANYPSMTAYRRNNAAHPIEQIGEKLRAMMPWIAANKIVDKSKN</sequence>
<organism>
    <name type="scientific">Pseudomonas paraeruginosa (strain DSM 24068 / PA7)</name>
    <name type="common">Pseudomonas aeruginosa (strain PA7)</name>
    <dbReference type="NCBI Taxonomy" id="381754"/>
    <lineage>
        <taxon>Bacteria</taxon>
        <taxon>Pseudomonadati</taxon>
        <taxon>Pseudomonadota</taxon>
        <taxon>Gammaproteobacteria</taxon>
        <taxon>Pseudomonadales</taxon>
        <taxon>Pseudomonadaceae</taxon>
        <taxon>Pseudomonas</taxon>
        <taxon>Pseudomonas paraeruginosa</taxon>
    </lineage>
</organism>
<dbReference type="EC" id="1.1.1.86" evidence="1"/>
<dbReference type="EMBL" id="CP000744">
    <property type="protein sequence ID" value="ABR84643.1"/>
    <property type="molecule type" value="Genomic_DNA"/>
</dbReference>
<dbReference type="RefSeq" id="WP_003148652.1">
    <property type="nucleotide sequence ID" value="NC_009656.1"/>
</dbReference>
<dbReference type="SMR" id="A6VCE7"/>
<dbReference type="GeneID" id="77223228"/>
<dbReference type="KEGG" id="pap:PSPA7_5408"/>
<dbReference type="HOGENOM" id="CLU_033821_0_1_6"/>
<dbReference type="UniPathway" id="UPA00047">
    <property type="reaction ID" value="UER00056"/>
</dbReference>
<dbReference type="UniPathway" id="UPA00049">
    <property type="reaction ID" value="UER00060"/>
</dbReference>
<dbReference type="Proteomes" id="UP000001582">
    <property type="component" value="Chromosome"/>
</dbReference>
<dbReference type="GO" id="GO:0005829">
    <property type="term" value="C:cytosol"/>
    <property type="evidence" value="ECO:0007669"/>
    <property type="project" value="TreeGrafter"/>
</dbReference>
<dbReference type="GO" id="GO:0004455">
    <property type="term" value="F:ketol-acid reductoisomerase activity"/>
    <property type="evidence" value="ECO:0007669"/>
    <property type="project" value="UniProtKB-UniRule"/>
</dbReference>
<dbReference type="GO" id="GO:0000287">
    <property type="term" value="F:magnesium ion binding"/>
    <property type="evidence" value="ECO:0007669"/>
    <property type="project" value="UniProtKB-UniRule"/>
</dbReference>
<dbReference type="GO" id="GO:0050661">
    <property type="term" value="F:NADP binding"/>
    <property type="evidence" value="ECO:0007669"/>
    <property type="project" value="InterPro"/>
</dbReference>
<dbReference type="GO" id="GO:0009097">
    <property type="term" value="P:isoleucine biosynthetic process"/>
    <property type="evidence" value="ECO:0007669"/>
    <property type="project" value="UniProtKB-UniRule"/>
</dbReference>
<dbReference type="GO" id="GO:0009099">
    <property type="term" value="P:L-valine biosynthetic process"/>
    <property type="evidence" value="ECO:0007669"/>
    <property type="project" value="UniProtKB-UniRule"/>
</dbReference>
<dbReference type="FunFam" id="3.40.50.720:FF:000023">
    <property type="entry name" value="Ketol-acid reductoisomerase (NADP(+))"/>
    <property type="match status" value="1"/>
</dbReference>
<dbReference type="Gene3D" id="6.10.240.10">
    <property type="match status" value="1"/>
</dbReference>
<dbReference type="Gene3D" id="3.40.50.720">
    <property type="entry name" value="NAD(P)-binding Rossmann-like Domain"/>
    <property type="match status" value="1"/>
</dbReference>
<dbReference type="HAMAP" id="MF_00435">
    <property type="entry name" value="IlvC"/>
    <property type="match status" value="1"/>
</dbReference>
<dbReference type="InterPro" id="IPR008927">
    <property type="entry name" value="6-PGluconate_DH-like_C_sf"/>
</dbReference>
<dbReference type="InterPro" id="IPR013023">
    <property type="entry name" value="KARI"/>
</dbReference>
<dbReference type="InterPro" id="IPR000506">
    <property type="entry name" value="KARI_C"/>
</dbReference>
<dbReference type="InterPro" id="IPR013116">
    <property type="entry name" value="KARI_N"/>
</dbReference>
<dbReference type="InterPro" id="IPR014359">
    <property type="entry name" value="KARI_prok"/>
</dbReference>
<dbReference type="InterPro" id="IPR036291">
    <property type="entry name" value="NAD(P)-bd_dom_sf"/>
</dbReference>
<dbReference type="NCBIfam" id="TIGR00465">
    <property type="entry name" value="ilvC"/>
    <property type="match status" value="1"/>
</dbReference>
<dbReference type="NCBIfam" id="NF004017">
    <property type="entry name" value="PRK05479.1"/>
    <property type="match status" value="1"/>
</dbReference>
<dbReference type="NCBIfam" id="NF009940">
    <property type="entry name" value="PRK13403.1"/>
    <property type="match status" value="1"/>
</dbReference>
<dbReference type="PANTHER" id="PTHR21371">
    <property type="entry name" value="KETOL-ACID REDUCTOISOMERASE, MITOCHONDRIAL"/>
    <property type="match status" value="1"/>
</dbReference>
<dbReference type="PANTHER" id="PTHR21371:SF1">
    <property type="entry name" value="KETOL-ACID REDUCTOISOMERASE, MITOCHONDRIAL"/>
    <property type="match status" value="1"/>
</dbReference>
<dbReference type="Pfam" id="PF01450">
    <property type="entry name" value="KARI_C"/>
    <property type="match status" value="1"/>
</dbReference>
<dbReference type="Pfam" id="PF07991">
    <property type="entry name" value="KARI_N"/>
    <property type="match status" value="1"/>
</dbReference>
<dbReference type="PIRSF" id="PIRSF000116">
    <property type="entry name" value="IlvC_gammaproteo"/>
    <property type="match status" value="1"/>
</dbReference>
<dbReference type="SUPFAM" id="SSF48179">
    <property type="entry name" value="6-phosphogluconate dehydrogenase C-terminal domain-like"/>
    <property type="match status" value="1"/>
</dbReference>
<dbReference type="SUPFAM" id="SSF51735">
    <property type="entry name" value="NAD(P)-binding Rossmann-fold domains"/>
    <property type="match status" value="1"/>
</dbReference>
<dbReference type="PROSITE" id="PS51851">
    <property type="entry name" value="KARI_C"/>
    <property type="match status" value="1"/>
</dbReference>
<dbReference type="PROSITE" id="PS51850">
    <property type="entry name" value="KARI_N"/>
    <property type="match status" value="1"/>
</dbReference>
<keyword id="KW-0028">Amino-acid biosynthesis</keyword>
<keyword id="KW-0100">Branched-chain amino acid biosynthesis</keyword>
<keyword id="KW-0460">Magnesium</keyword>
<keyword id="KW-0479">Metal-binding</keyword>
<keyword id="KW-0521">NADP</keyword>
<keyword id="KW-0560">Oxidoreductase</keyword>
<name>ILVC_PSEP7</name>
<comment type="function">
    <text evidence="1">Involved in the biosynthesis of branched-chain amino acids (BCAA). Catalyzes an alkyl-migration followed by a ketol-acid reduction of (S)-2-acetolactate (S2AL) to yield (R)-2,3-dihydroxy-isovalerate. In the isomerase reaction, S2AL is rearranged via a Mg-dependent methyl migration to produce 3-hydroxy-3-methyl-2-ketobutyrate (HMKB). In the reductase reaction, this 2-ketoacid undergoes a metal-dependent reduction by NADPH to yield (R)-2,3-dihydroxy-isovalerate.</text>
</comment>
<comment type="catalytic activity">
    <reaction evidence="1">
        <text>(2R)-2,3-dihydroxy-3-methylbutanoate + NADP(+) = (2S)-2-acetolactate + NADPH + H(+)</text>
        <dbReference type="Rhea" id="RHEA:22068"/>
        <dbReference type="ChEBI" id="CHEBI:15378"/>
        <dbReference type="ChEBI" id="CHEBI:49072"/>
        <dbReference type="ChEBI" id="CHEBI:57783"/>
        <dbReference type="ChEBI" id="CHEBI:58349"/>
        <dbReference type="ChEBI" id="CHEBI:58476"/>
        <dbReference type="EC" id="1.1.1.86"/>
    </reaction>
</comment>
<comment type="catalytic activity">
    <reaction evidence="1">
        <text>(2R,3R)-2,3-dihydroxy-3-methylpentanoate + NADP(+) = (S)-2-ethyl-2-hydroxy-3-oxobutanoate + NADPH + H(+)</text>
        <dbReference type="Rhea" id="RHEA:13493"/>
        <dbReference type="ChEBI" id="CHEBI:15378"/>
        <dbReference type="ChEBI" id="CHEBI:49256"/>
        <dbReference type="ChEBI" id="CHEBI:49258"/>
        <dbReference type="ChEBI" id="CHEBI:57783"/>
        <dbReference type="ChEBI" id="CHEBI:58349"/>
        <dbReference type="EC" id="1.1.1.86"/>
    </reaction>
</comment>
<comment type="cofactor">
    <cofactor evidence="1">
        <name>Mg(2+)</name>
        <dbReference type="ChEBI" id="CHEBI:18420"/>
    </cofactor>
    <text evidence="1">Binds 2 magnesium ions per subunit.</text>
</comment>
<comment type="pathway">
    <text evidence="1">Amino-acid biosynthesis; L-isoleucine biosynthesis; L-isoleucine from 2-oxobutanoate: step 2/4.</text>
</comment>
<comment type="pathway">
    <text evidence="1">Amino-acid biosynthesis; L-valine biosynthesis; L-valine from pyruvate: step 2/4.</text>
</comment>
<comment type="similarity">
    <text evidence="1">Belongs to the ketol-acid reductoisomerase family.</text>
</comment>
<accession>A6VCE7</accession>
<reference key="1">
    <citation type="submission" date="2007-06" db="EMBL/GenBank/DDBJ databases">
        <authorList>
            <person name="Dodson R.J."/>
            <person name="Harkins D."/>
            <person name="Paulsen I.T."/>
        </authorList>
    </citation>
    <scope>NUCLEOTIDE SEQUENCE [LARGE SCALE GENOMIC DNA]</scope>
    <source>
        <strain>DSM 24068 / PA7</strain>
    </source>
</reference>
<gene>
    <name evidence="1" type="primary">ilvC</name>
    <name type="ordered locus">PSPA7_5408</name>
</gene>
<proteinExistence type="inferred from homology"/>